<sequence>MSTPSIHCLKPSPLHLPSGIPGSPGRQRRHTLPANEFRCLTPKDAAGVFEIEREAFISVSGNCPLNLDEVRHFLTLCPELSLGWFVEGRLVAFIIGSLWDEERLTQESLTLHRPGGRTAHLHALAVHHSFRQQGKGSVLLWRYLQHAGGQPAVRRAVLMCEDALVPFYQRFGFHPAGPCAVVVGSLTFTEMHCSLRGHAALRRNSDR</sequence>
<organism>
    <name type="scientific">Bos taurus</name>
    <name type="common">Bovine</name>
    <dbReference type="NCBI Taxonomy" id="9913"/>
    <lineage>
        <taxon>Eukaryota</taxon>
        <taxon>Metazoa</taxon>
        <taxon>Chordata</taxon>
        <taxon>Craniata</taxon>
        <taxon>Vertebrata</taxon>
        <taxon>Euteleostomi</taxon>
        <taxon>Mammalia</taxon>
        <taxon>Eutheria</taxon>
        <taxon>Laurasiatheria</taxon>
        <taxon>Artiodactyla</taxon>
        <taxon>Ruminantia</taxon>
        <taxon>Pecora</taxon>
        <taxon>Bovidae</taxon>
        <taxon>Bovinae</taxon>
        <taxon>Bos</taxon>
    </lineage>
</organism>
<keyword id="KW-0012">Acyltransferase</keyword>
<keyword id="KW-0090">Biological rhythms</keyword>
<keyword id="KW-0963">Cytoplasm</keyword>
<keyword id="KW-0471">Melatonin biosynthesis</keyword>
<keyword id="KW-0597">Phosphoprotein</keyword>
<keyword id="KW-1185">Reference proteome</keyword>
<keyword id="KW-0808">Transferase</keyword>
<proteinExistence type="evidence at protein level"/>
<accession>O02785</accession>
<name>SNAT_BOVIN</name>
<evidence type="ECO:0000250" key="1"/>
<evidence type="ECO:0000250" key="2">
    <source>
        <dbReference type="UniProtKB" id="O97756"/>
    </source>
</evidence>
<evidence type="ECO:0000250" key="3">
    <source>
        <dbReference type="UniProtKB" id="Q16613"/>
    </source>
</evidence>
<evidence type="ECO:0000250" key="4">
    <source>
        <dbReference type="UniProtKB" id="Q29495"/>
    </source>
</evidence>
<evidence type="ECO:0000255" key="5">
    <source>
        <dbReference type="PROSITE-ProRule" id="PRU00532"/>
    </source>
</evidence>
<evidence type="ECO:0000269" key="6">
    <source>
    </source>
</evidence>
<evidence type="ECO:0000305" key="7"/>
<protein>
    <recommendedName>
        <fullName>Serotonin N-acetyltransferase</fullName>
        <shortName>Serotonin acetylase</shortName>
        <ecNumber evidence="6">2.3.1.87</ecNumber>
    </recommendedName>
    <alternativeName>
        <fullName>Aralkylamine N-acetyltransferase</fullName>
        <shortName>AA-NAT</shortName>
    </alternativeName>
</protein>
<comment type="function">
    <text evidence="6">Controls the night/day rhythm of melatonin production in the pineal gland. Catalyzes the N-acetylation of serotonin into N-acetylserotonin, the penultimate step in the synthesis of melatonin.</text>
</comment>
<comment type="catalytic activity">
    <reaction evidence="6">
        <text>a 2-arylethylamine + acetyl-CoA = an N-acetyl-2-arylethylamine + CoA + H(+)</text>
        <dbReference type="Rhea" id="RHEA:20497"/>
        <dbReference type="ChEBI" id="CHEBI:15378"/>
        <dbReference type="ChEBI" id="CHEBI:55469"/>
        <dbReference type="ChEBI" id="CHEBI:57287"/>
        <dbReference type="ChEBI" id="CHEBI:57288"/>
        <dbReference type="ChEBI" id="CHEBI:77827"/>
        <dbReference type="EC" id="2.3.1.87"/>
    </reaction>
</comment>
<comment type="pathway">
    <text>Aromatic compound metabolism; melatonin biosynthesis; melatonin from serotonin: step 1/2.</text>
</comment>
<comment type="subunit">
    <text evidence="1">Monomer (By similarity). Interacts with several 14-3-3 proteins, including YWHAB, YWHAE, YWHAG and YWHAZ, preferentially when phosphorylated at Thr-31 (By similarity). Phosphorylation on Ser-205 also allows binding to YWHAZ, but with lower affinity (By similarity). The interaction with YWHAZ considerably increases affinity for arylalkylamines and acetyl-CoA and protects the enzyme from dephosphorylation and proteasomal degradation. It may also prevent thiol-dependent inactivation (By similarity).</text>
</comment>
<comment type="subcellular location">
    <subcellularLocation>
        <location evidence="3">Cytoplasm</location>
    </subcellularLocation>
</comment>
<comment type="tissue specificity">
    <text evidence="6">High levels in pineal gland and retina.</text>
</comment>
<comment type="induction">
    <text evidence="6">Exhibits night/day variations with an increased expression at night. Higher levels in pineal gland in early morning than in early afternoon (at protein level).</text>
</comment>
<comment type="PTM">
    <text evidence="1">cAMP-dependent phosphorylation on both N-terminal Thr-31 and C-terminal Ser-205 regulates AANAT activity by promoting interaction with 14-3-3 proteins.</text>
</comment>
<comment type="similarity">
    <text evidence="7">Belongs to the acetyltransferase family. AANAT subfamily.</text>
</comment>
<gene>
    <name type="primary">AANAT</name>
    <name type="synonym">SNAT</name>
</gene>
<reference key="1">
    <citation type="journal article" date="1999" name="Brain Res. Mol. Brain Res.">
        <title>Bovine arylalkylamine N-acetyltransferase activity correlated with mRNA expression in pineal and retina.</title>
        <authorList>
            <person name="Craft C.M."/>
            <person name="Murage J."/>
            <person name="Brown B."/>
            <person name="Zhan-Poe X."/>
        </authorList>
    </citation>
    <scope>NUCLEOTIDE SEQUENCE [MRNA]</scope>
    <scope>FUNCTION</scope>
    <scope>CATALYTIC ACTIVITY</scope>
    <scope>INDUCTION</scope>
    <scope>TISSUE SPECIFICITY</scope>
    <source>
        <tissue>Pineal gland</tissue>
    </source>
</reference>
<dbReference type="EC" id="2.3.1.87" evidence="6"/>
<dbReference type="EMBL" id="AD000742">
    <property type="protein sequence ID" value="AAB58942.1"/>
    <property type="molecule type" value="mRNA"/>
</dbReference>
<dbReference type="RefSeq" id="NP_803475.1">
    <property type="nucleotide sequence ID" value="NM_177509.2"/>
</dbReference>
<dbReference type="SMR" id="O02785"/>
<dbReference type="FunCoup" id="O02785">
    <property type="interactions" value="13"/>
</dbReference>
<dbReference type="STRING" id="9913.ENSBTAP00000019543"/>
<dbReference type="PaxDb" id="9913-ENSBTAP00000019543"/>
<dbReference type="GeneID" id="281583"/>
<dbReference type="KEGG" id="bta:281583"/>
<dbReference type="CTD" id="15"/>
<dbReference type="eggNOG" id="KOG4144">
    <property type="taxonomic scope" value="Eukaryota"/>
</dbReference>
<dbReference type="InParanoid" id="O02785"/>
<dbReference type="OrthoDB" id="30840at2759"/>
<dbReference type="UniPathway" id="UPA00837">
    <property type="reaction ID" value="UER00815"/>
</dbReference>
<dbReference type="Proteomes" id="UP000009136">
    <property type="component" value="Unplaced"/>
</dbReference>
<dbReference type="GO" id="GO:0005737">
    <property type="term" value="C:cytoplasm"/>
    <property type="evidence" value="ECO:0000318"/>
    <property type="project" value="GO_Central"/>
</dbReference>
<dbReference type="GO" id="GO:0004059">
    <property type="term" value="F:aralkylamine N-acetyltransferase activity"/>
    <property type="evidence" value="ECO:0000318"/>
    <property type="project" value="GO_Central"/>
</dbReference>
<dbReference type="GO" id="GO:0007623">
    <property type="term" value="P:circadian rhythm"/>
    <property type="evidence" value="ECO:0000318"/>
    <property type="project" value="GO_Central"/>
</dbReference>
<dbReference type="GO" id="GO:0030187">
    <property type="term" value="P:melatonin biosynthetic process"/>
    <property type="evidence" value="ECO:0000318"/>
    <property type="project" value="GO_Central"/>
</dbReference>
<dbReference type="GO" id="GO:0009416">
    <property type="term" value="P:response to light stimulus"/>
    <property type="evidence" value="ECO:0000318"/>
    <property type="project" value="GO_Central"/>
</dbReference>
<dbReference type="CDD" id="cd04301">
    <property type="entry name" value="NAT_SF"/>
    <property type="match status" value="1"/>
</dbReference>
<dbReference type="FunFam" id="3.40.630.30:FF:000021">
    <property type="entry name" value="Serotonin N-acetyltransferase"/>
    <property type="match status" value="1"/>
</dbReference>
<dbReference type="Gene3D" id="3.40.630.30">
    <property type="match status" value="1"/>
</dbReference>
<dbReference type="InterPro" id="IPR016181">
    <property type="entry name" value="Acyl_CoA_acyltransferase"/>
</dbReference>
<dbReference type="InterPro" id="IPR000182">
    <property type="entry name" value="GNAT_dom"/>
</dbReference>
<dbReference type="InterPro" id="IPR051635">
    <property type="entry name" value="SNAT-like"/>
</dbReference>
<dbReference type="PANTHER" id="PTHR10908">
    <property type="entry name" value="SEROTONIN N-ACETYLTRANSFERASE"/>
    <property type="match status" value="1"/>
</dbReference>
<dbReference type="PANTHER" id="PTHR10908:SF0">
    <property type="entry name" value="SEROTONIN N-ACETYLTRANSFERASE"/>
    <property type="match status" value="1"/>
</dbReference>
<dbReference type="Pfam" id="PF00583">
    <property type="entry name" value="Acetyltransf_1"/>
    <property type="match status" value="1"/>
</dbReference>
<dbReference type="SUPFAM" id="SSF55729">
    <property type="entry name" value="Acyl-CoA N-acyltransferases (Nat)"/>
    <property type="match status" value="1"/>
</dbReference>
<dbReference type="PROSITE" id="PS51186">
    <property type="entry name" value="GNAT"/>
    <property type="match status" value="1"/>
</dbReference>
<feature type="chain" id="PRO_0000074579" description="Serotonin N-acetyltransferase">
    <location>
        <begin position="1"/>
        <end position="207"/>
    </location>
</feature>
<feature type="domain" description="N-acetyltransferase" evidence="5">
    <location>
        <begin position="35"/>
        <end position="196"/>
    </location>
</feature>
<feature type="binding site" evidence="4">
    <location>
        <begin position="124"/>
        <end position="126"/>
    </location>
    <ligand>
        <name>acetyl-CoA</name>
        <dbReference type="ChEBI" id="CHEBI:57288"/>
    </ligand>
</feature>
<feature type="binding site" evidence="4">
    <location>
        <position position="124"/>
    </location>
    <ligand>
        <name>substrate</name>
    </ligand>
</feature>
<feature type="binding site" evidence="4">
    <location>
        <begin position="132"/>
        <end position="137"/>
    </location>
    <ligand>
        <name>acetyl-CoA</name>
        <dbReference type="ChEBI" id="CHEBI:57288"/>
    </ligand>
</feature>
<feature type="binding site" evidence="4">
    <location>
        <position position="159"/>
    </location>
    <ligand>
        <name>substrate</name>
    </ligand>
</feature>
<feature type="binding site" evidence="4">
    <location>
        <begin position="168"/>
        <end position="170"/>
    </location>
    <ligand>
        <name>acetyl-CoA</name>
        <dbReference type="ChEBI" id="CHEBI:57288"/>
    </ligand>
</feature>
<feature type="site" description="Important for the catalytic mechanism; involved in substrate deprotonation" evidence="4">
    <location>
        <position position="120"/>
    </location>
</feature>
<feature type="site" description="Important for the catalytic mechanism; involved in substrate deprotonation" evidence="4">
    <location>
        <position position="122"/>
    </location>
</feature>
<feature type="modified residue" description="Phosphothreonine; by PKA" evidence="2">
    <location>
        <position position="31"/>
    </location>
</feature>
<feature type="modified residue" description="Phosphoserine" evidence="4">
    <location>
        <position position="205"/>
    </location>
</feature>